<reference key="1">
    <citation type="journal article" date="2007" name="Nat. Biotechnol.">
        <title>Complete genome sequence of the myxobacterium Sorangium cellulosum.</title>
        <authorList>
            <person name="Schneiker S."/>
            <person name="Perlova O."/>
            <person name="Kaiser O."/>
            <person name="Gerth K."/>
            <person name="Alici A."/>
            <person name="Altmeyer M.O."/>
            <person name="Bartels D."/>
            <person name="Bekel T."/>
            <person name="Beyer S."/>
            <person name="Bode E."/>
            <person name="Bode H.B."/>
            <person name="Bolten C.J."/>
            <person name="Choudhuri J.V."/>
            <person name="Doss S."/>
            <person name="Elnakady Y.A."/>
            <person name="Frank B."/>
            <person name="Gaigalat L."/>
            <person name="Goesmann A."/>
            <person name="Groeger C."/>
            <person name="Gross F."/>
            <person name="Jelsbak L."/>
            <person name="Jelsbak L."/>
            <person name="Kalinowski J."/>
            <person name="Kegler C."/>
            <person name="Knauber T."/>
            <person name="Konietzny S."/>
            <person name="Kopp M."/>
            <person name="Krause L."/>
            <person name="Krug D."/>
            <person name="Linke B."/>
            <person name="Mahmud T."/>
            <person name="Martinez-Arias R."/>
            <person name="McHardy A.C."/>
            <person name="Merai M."/>
            <person name="Meyer F."/>
            <person name="Mormann S."/>
            <person name="Munoz-Dorado J."/>
            <person name="Perez J."/>
            <person name="Pradella S."/>
            <person name="Rachid S."/>
            <person name="Raddatz G."/>
            <person name="Rosenau F."/>
            <person name="Rueckert C."/>
            <person name="Sasse F."/>
            <person name="Scharfe M."/>
            <person name="Schuster S.C."/>
            <person name="Suen G."/>
            <person name="Treuner-Lange A."/>
            <person name="Velicer G.J."/>
            <person name="Vorholter F.-J."/>
            <person name="Weissman K.J."/>
            <person name="Welch R.D."/>
            <person name="Wenzel S.C."/>
            <person name="Whitworth D.E."/>
            <person name="Wilhelm S."/>
            <person name="Wittmann C."/>
            <person name="Bloecker H."/>
            <person name="Puehler A."/>
            <person name="Mueller R."/>
        </authorList>
    </citation>
    <scope>NUCLEOTIDE SEQUENCE [LARGE SCALE GENOMIC DNA]</scope>
    <source>
        <strain>So ce56</strain>
    </source>
</reference>
<protein>
    <recommendedName>
        <fullName evidence="1">SsrA-binding protein</fullName>
    </recommendedName>
    <alternativeName>
        <fullName evidence="1">Small protein B</fullName>
    </alternativeName>
</protein>
<dbReference type="EMBL" id="AM746676">
    <property type="protein sequence ID" value="CAN92459.1"/>
    <property type="molecule type" value="Genomic_DNA"/>
</dbReference>
<dbReference type="RefSeq" id="WP_012234932.1">
    <property type="nucleotide sequence ID" value="NC_010162.1"/>
</dbReference>
<dbReference type="SMR" id="A9G109"/>
<dbReference type="STRING" id="448385.sce2300"/>
<dbReference type="KEGG" id="scl:sce2300"/>
<dbReference type="eggNOG" id="COG0691">
    <property type="taxonomic scope" value="Bacteria"/>
</dbReference>
<dbReference type="HOGENOM" id="CLU_108953_2_1_7"/>
<dbReference type="OrthoDB" id="9805462at2"/>
<dbReference type="BioCyc" id="SCEL448385:SCE_RS11790-MONOMER"/>
<dbReference type="Proteomes" id="UP000002139">
    <property type="component" value="Chromosome"/>
</dbReference>
<dbReference type="GO" id="GO:0005829">
    <property type="term" value="C:cytosol"/>
    <property type="evidence" value="ECO:0007669"/>
    <property type="project" value="TreeGrafter"/>
</dbReference>
<dbReference type="GO" id="GO:0003723">
    <property type="term" value="F:RNA binding"/>
    <property type="evidence" value="ECO:0007669"/>
    <property type="project" value="UniProtKB-UniRule"/>
</dbReference>
<dbReference type="GO" id="GO:0070929">
    <property type="term" value="P:trans-translation"/>
    <property type="evidence" value="ECO:0007669"/>
    <property type="project" value="UniProtKB-UniRule"/>
</dbReference>
<dbReference type="CDD" id="cd09294">
    <property type="entry name" value="SmpB"/>
    <property type="match status" value="1"/>
</dbReference>
<dbReference type="Gene3D" id="2.40.280.10">
    <property type="match status" value="1"/>
</dbReference>
<dbReference type="HAMAP" id="MF_00023">
    <property type="entry name" value="SmpB"/>
    <property type="match status" value="1"/>
</dbReference>
<dbReference type="InterPro" id="IPR023620">
    <property type="entry name" value="SmpB"/>
</dbReference>
<dbReference type="InterPro" id="IPR000037">
    <property type="entry name" value="SsrA-bd_prot"/>
</dbReference>
<dbReference type="NCBIfam" id="NF003843">
    <property type="entry name" value="PRK05422.1"/>
    <property type="match status" value="1"/>
</dbReference>
<dbReference type="NCBIfam" id="TIGR00086">
    <property type="entry name" value="smpB"/>
    <property type="match status" value="1"/>
</dbReference>
<dbReference type="PANTHER" id="PTHR30308:SF2">
    <property type="entry name" value="SSRA-BINDING PROTEIN"/>
    <property type="match status" value="1"/>
</dbReference>
<dbReference type="PANTHER" id="PTHR30308">
    <property type="entry name" value="TMRNA-BINDING COMPONENT OF TRANS-TRANSLATION TAGGING COMPLEX"/>
    <property type="match status" value="1"/>
</dbReference>
<dbReference type="Pfam" id="PF01668">
    <property type="entry name" value="SmpB"/>
    <property type="match status" value="1"/>
</dbReference>
<dbReference type="SUPFAM" id="SSF74982">
    <property type="entry name" value="Small protein B (SmpB)"/>
    <property type="match status" value="1"/>
</dbReference>
<keyword id="KW-0963">Cytoplasm</keyword>
<keyword id="KW-1185">Reference proteome</keyword>
<keyword id="KW-0694">RNA-binding</keyword>
<evidence type="ECO:0000255" key="1">
    <source>
        <dbReference type="HAMAP-Rule" id="MF_00023"/>
    </source>
</evidence>
<sequence length="162" mass="17903">MPKEKARPGETLIARNKRAGFNYDLGDRFEAGIVLKGSEVKMLRAGKADLTDSFCTVLRGEVFLHGVSIAAMASAAFGHVPKGARKLLLHRREIERIDLSIAREGMTAVATRLYFKSGLAKVEIALARGKKSHDKRETIKEQDAEREMRAVVVHGQRGYGRA</sequence>
<feature type="chain" id="PRO_0000331098" description="SsrA-binding protein">
    <location>
        <begin position="1"/>
        <end position="162"/>
    </location>
</feature>
<gene>
    <name evidence="1" type="primary">smpB</name>
    <name type="ordered locus">sce2300</name>
</gene>
<accession>A9G109</accession>
<proteinExistence type="inferred from homology"/>
<name>SSRP_SORC5</name>
<comment type="function">
    <text evidence="1">Required for rescue of stalled ribosomes mediated by trans-translation. Binds to transfer-messenger RNA (tmRNA), required for stable association of tmRNA with ribosomes. tmRNA and SmpB together mimic tRNA shape, replacing the anticodon stem-loop with SmpB. tmRNA is encoded by the ssrA gene; the 2 termini fold to resemble tRNA(Ala) and it encodes a 'tag peptide', a short internal open reading frame. During trans-translation Ala-aminoacylated tmRNA acts like a tRNA, entering the A-site of stalled ribosomes, displacing the stalled mRNA. The ribosome then switches to translate the ORF on the tmRNA; the nascent peptide is terminated with the 'tag peptide' encoded by the tmRNA and targeted for degradation. The ribosome is freed to recommence translation, which seems to be the essential function of trans-translation.</text>
</comment>
<comment type="subcellular location">
    <subcellularLocation>
        <location evidence="1">Cytoplasm</location>
    </subcellularLocation>
    <text evidence="1">The tmRNA-SmpB complex associates with stalled 70S ribosomes.</text>
</comment>
<comment type="similarity">
    <text evidence="1">Belongs to the SmpB family.</text>
</comment>
<organism>
    <name type="scientific">Sorangium cellulosum (strain So ce56)</name>
    <name type="common">Polyangium cellulosum (strain So ce56)</name>
    <dbReference type="NCBI Taxonomy" id="448385"/>
    <lineage>
        <taxon>Bacteria</taxon>
        <taxon>Pseudomonadati</taxon>
        <taxon>Myxococcota</taxon>
        <taxon>Polyangia</taxon>
        <taxon>Polyangiales</taxon>
        <taxon>Polyangiaceae</taxon>
        <taxon>Sorangium</taxon>
    </lineage>
</organism>